<gene>
    <name type="ordered locus">YNL109W</name>
    <name type="ORF">N1958</name>
</gene>
<name>YNK9_YEAST</name>
<reference key="1">
    <citation type="journal article" date="1997" name="Yeast">
        <title>The DNA sequence of cosmid 14-13b from chromosome XIV of Saccharomyces cerevisiae reveals an unusually high number of overlapping open reading frames.</title>
        <authorList>
            <person name="de Antoni A."/>
            <person name="D'Angelo M."/>
            <person name="Dal Pero F."/>
            <person name="Sartorello F."/>
            <person name="Pandolfo D."/>
            <person name="Pallavicini A."/>
            <person name="Lanfranchi G."/>
            <person name="Valle G."/>
        </authorList>
    </citation>
    <scope>NUCLEOTIDE SEQUENCE [GENOMIC DNA]</scope>
</reference>
<reference key="2">
    <citation type="journal article" date="1997" name="Nature">
        <title>The nucleotide sequence of Saccharomyces cerevisiae chromosome XIV and its evolutionary implications.</title>
        <authorList>
            <person name="Philippsen P."/>
            <person name="Kleine K."/>
            <person name="Poehlmann R."/>
            <person name="Duesterhoeft A."/>
            <person name="Hamberg K."/>
            <person name="Hegemann J.H."/>
            <person name="Obermaier B."/>
            <person name="Urrestarazu L.A."/>
            <person name="Aert R."/>
            <person name="Albermann K."/>
            <person name="Altmann R."/>
            <person name="Andre B."/>
            <person name="Baladron V."/>
            <person name="Ballesta J.P.G."/>
            <person name="Becam A.-M."/>
            <person name="Beinhauer J.D."/>
            <person name="Boskovic J."/>
            <person name="Buitrago M.J."/>
            <person name="Bussereau F."/>
            <person name="Coster F."/>
            <person name="Crouzet M."/>
            <person name="D'Angelo M."/>
            <person name="Dal Pero F."/>
            <person name="De Antoni A."/>
            <person name="del Rey F."/>
            <person name="Doignon F."/>
            <person name="Domdey H."/>
            <person name="Dubois E."/>
            <person name="Fiedler T.A."/>
            <person name="Fleig U."/>
            <person name="Floeth M."/>
            <person name="Fritz C."/>
            <person name="Gaillardin C."/>
            <person name="Garcia-Cantalejo J.M."/>
            <person name="Glansdorff N."/>
            <person name="Goffeau A."/>
            <person name="Gueldener U."/>
            <person name="Herbert C.J."/>
            <person name="Heumann K."/>
            <person name="Heuss-Neitzel D."/>
            <person name="Hilbert H."/>
            <person name="Hinni K."/>
            <person name="Iraqui Houssaini I."/>
            <person name="Jacquet M."/>
            <person name="Jimenez A."/>
            <person name="Jonniaux J.-L."/>
            <person name="Karpfinger-Hartl L."/>
            <person name="Lanfranchi G."/>
            <person name="Lepingle A."/>
            <person name="Levesque H."/>
            <person name="Lyck R."/>
            <person name="Maftahi M."/>
            <person name="Mallet L."/>
            <person name="Maurer C.T.C."/>
            <person name="Messenguy F."/>
            <person name="Mewes H.-W."/>
            <person name="Moestl D."/>
            <person name="Nasr F."/>
            <person name="Nicaud J.-M."/>
            <person name="Niedenthal R.K."/>
            <person name="Pandolfo D."/>
            <person name="Pierard A."/>
            <person name="Piravandi E."/>
            <person name="Planta R.J."/>
            <person name="Pohl T.M."/>
            <person name="Purnelle B."/>
            <person name="Rebischung C."/>
            <person name="Remacha M.A."/>
            <person name="Revuelta J.L."/>
            <person name="Rinke M."/>
            <person name="Saiz J.E."/>
            <person name="Sartorello F."/>
            <person name="Scherens B."/>
            <person name="Sen-Gupta M."/>
            <person name="Soler-Mira A."/>
            <person name="Urbanus J.H.M."/>
            <person name="Valle G."/>
            <person name="Van Dyck L."/>
            <person name="Verhasselt P."/>
            <person name="Vierendeels F."/>
            <person name="Vissers S."/>
            <person name="Voet M."/>
            <person name="Volckaert G."/>
            <person name="Wach A."/>
            <person name="Wambutt R."/>
            <person name="Wedler H."/>
            <person name="Zollner A."/>
            <person name="Hani J."/>
        </authorList>
    </citation>
    <scope>NUCLEOTIDE SEQUENCE [LARGE SCALE GENOMIC DNA]</scope>
    <source>
        <strain>ATCC 204508 / S288c</strain>
    </source>
</reference>
<reference key="3">
    <citation type="journal article" date="2014" name="G3 (Bethesda)">
        <title>The reference genome sequence of Saccharomyces cerevisiae: Then and now.</title>
        <authorList>
            <person name="Engel S.R."/>
            <person name="Dietrich F.S."/>
            <person name="Fisk D.G."/>
            <person name="Binkley G."/>
            <person name="Balakrishnan R."/>
            <person name="Costanzo M.C."/>
            <person name="Dwight S.S."/>
            <person name="Hitz B.C."/>
            <person name="Karra K."/>
            <person name="Nash R.S."/>
            <person name="Weng S."/>
            <person name="Wong E.D."/>
            <person name="Lloyd P."/>
            <person name="Skrzypek M.S."/>
            <person name="Miyasato S.R."/>
            <person name="Simison M."/>
            <person name="Cherry J.M."/>
        </authorList>
    </citation>
    <scope>GENOME REANNOTATION</scope>
    <source>
        <strain>ATCC 204508 / S288c</strain>
    </source>
</reference>
<reference key="4">
    <citation type="journal article" date="2006" name="Proc. Natl. Acad. Sci. U.S.A.">
        <title>A global topology map of the Saccharomyces cerevisiae membrane proteome.</title>
        <authorList>
            <person name="Kim H."/>
            <person name="Melen K."/>
            <person name="Oesterberg M."/>
            <person name="von Heijne G."/>
        </authorList>
    </citation>
    <scope>TOPOLOGY [LARGE SCALE ANALYSIS]</scope>
    <source>
        <strain>ATCC 208353 / W303-1A</strain>
    </source>
</reference>
<accession>P53928</accession>
<comment type="subcellular location">
    <subcellularLocation>
        <location>Membrane</location>
        <topology>Multi-pass membrane protein</topology>
    </subcellularLocation>
</comment>
<comment type="miscellaneous">
    <text evidence="2">Partially overlaps YNL108c.</text>
</comment>
<comment type="caution">
    <text evidence="3">Product of a dubious gene prediction unlikely to encode a functional protein. Because of that it is not part of the S.cerevisiae S288c complete/reference proteome set.</text>
</comment>
<proteinExistence type="uncertain"/>
<feature type="chain" id="PRO_0000203435" description="Putative uncharacterized membrane protein YNL109W">
    <location>
        <begin position="1"/>
        <end position="181"/>
    </location>
</feature>
<feature type="topological domain" description="Cytoplasmic" evidence="1">
    <location>
        <begin position="1"/>
        <end position="14"/>
    </location>
</feature>
<feature type="transmembrane region" description="Helical" evidence="1">
    <location>
        <begin position="15"/>
        <end position="35"/>
    </location>
</feature>
<feature type="topological domain" description="Extracellular" evidence="1">
    <location>
        <begin position="36"/>
        <end position="58"/>
    </location>
</feature>
<feature type="transmembrane region" description="Helical" evidence="1">
    <location>
        <begin position="59"/>
        <end position="79"/>
    </location>
</feature>
<feature type="topological domain" description="Cytoplasmic" evidence="1">
    <location>
        <begin position="80"/>
        <end position="84"/>
    </location>
</feature>
<feature type="transmembrane region" description="Helical" evidence="1">
    <location>
        <begin position="85"/>
        <end position="105"/>
    </location>
</feature>
<feature type="topological domain" description="Extracellular" evidence="1">
    <location>
        <begin position="106"/>
        <end position="116"/>
    </location>
</feature>
<feature type="transmembrane region" description="Helical" evidence="1">
    <location>
        <begin position="117"/>
        <end position="137"/>
    </location>
</feature>
<feature type="topological domain" description="Cytoplasmic" evidence="1">
    <location>
        <begin position="138"/>
        <end position="153"/>
    </location>
</feature>
<feature type="transmembrane region" description="Helical" evidence="1">
    <location>
        <begin position="154"/>
        <end position="174"/>
    </location>
</feature>
<feature type="topological domain" description="Extracellular" evidence="1">
    <location>
        <begin position="175"/>
        <end position="181"/>
    </location>
</feature>
<evidence type="ECO:0000255" key="1"/>
<evidence type="ECO:0000305" key="2"/>
<evidence type="ECO:0000305" key="3">
    <source>
    </source>
</evidence>
<sequence length="181" mass="19713">MQKCIMRSTEFKTHFSFHSIFSFPLSAALLALISASEPASKAFINVQFISSPLVKKEVLPFIVSFHSLSSNGILSFSPFTSSNLSIAQLPFLIKVPLLSMGSLALENFNKFIPRADLVAAWVTIIMVFTFGNFLSTLSIKTGQNLWHLSKISSSVSPLLLGIILGSQSGEIMLGKNLLITS</sequence>
<keyword id="KW-0472">Membrane</keyword>
<keyword id="KW-0812">Transmembrane</keyword>
<keyword id="KW-1133">Transmembrane helix</keyword>
<dbReference type="EMBL" id="Z69382">
    <property type="protein sequence ID" value="CAA93398.1"/>
    <property type="molecule type" value="Genomic_DNA"/>
</dbReference>
<dbReference type="EMBL" id="Z71385">
    <property type="protein sequence ID" value="CAA95987.1"/>
    <property type="molecule type" value="Genomic_DNA"/>
</dbReference>
<dbReference type="PIR" id="S63050">
    <property type="entry name" value="S63050"/>
</dbReference>
<dbReference type="DIP" id="DIP-5064N"/>
<dbReference type="PaxDb" id="4932-YNL109W"/>
<dbReference type="EnsemblFungi" id="YNL109W_mRNA">
    <property type="protein sequence ID" value="YNL109W"/>
    <property type="gene ID" value="YNL109W"/>
</dbReference>
<dbReference type="AGR" id="SGD:S000005053"/>
<dbReference type="SGD" id="S000005053">
    <property type="gene designation" value="YNL109W"/>
</dbReference>
<dbReference type="HOGENOM" id="CLU_1490143_0_0_1"/>
<dbReference type="GO" id="GO:0016020">
    <property type="term" value="C:membrane"/>
    <property type="evidence" value="ECO:0007669"/>
    <property type="project" value="UniProtKB-SubCell"/>
</dbReference>
<protein>
    <recommendedName>
        <fullName>Putative uncharacterized membrane protein YNL109W</fullName>
    </recommendedName>
</protein>
<organism>
    <name type="scientific">Saccharomyces cerevisiae (strain ATCC 204508 / S288c)</name>
    <name type="common">Baker's yeast</name>
    <dbReference type="NCBI Taxonomy" id="559292"/>
    <lineage>
        <taxon>Eukaryota</taxon>
        <taxon>Fungi</taxon>
        <taxon>Dikarya</taxon>
        <taxon>Ascomycota</taxon>
        <taxon>Saccharomycotina</taxon>
        <taxon>Saccharomycetes</taxon>
        <taxon>Saccharomycetales</taxon>
        <taxon>Saccharomycetaceae</taxon>
        <taxon>Saccharomyces</taxon>
    </lineage>
</organism>